<dbReference type="EC" id="7.1.1.-" evidence="1"/>
<dbReference type="EMBL" id="CT573213">
    <property type="protein sequence ID" value="CAJ59704.1"/>
    <property type="molecule type" value="Genomic_DNA"/>
</dbReference>
<dbReference type="RefSeq" id="WP_011602266.1">
    <property type="nucleotide sequence ID" value="NC_008278.1"/>
</dbReference>
<dbReference type="SMR" id="Q0RRW1"/>
<dbReference type="STRING" id="326424.FRAAL1039"/>
<dbReference type="KEGG" id="fal:FRAAL1039"/>
<dbReference type="eggNOG" id="COG1005">
    <property type="taxonomic scope" value="Bacteria"/>
</dbReference>
<dbReference type="HOGENOM" id="CLU_015134_0_0_11"/>
<dbReference type="OrthoDB" id="9803734at2"/>
<dbReference type="Proteomes" id="UP000000657">
    <property type="component" value="Chromosome"/>
</dbReference>
<dbReference type="GO" id="GO:0005886">
    <property type="term" value="C:plasma membrane"/>
    <property type="evidence" value="ECO:0007669"/>
    <property type="project" value="UniProtKB-SubCell"/>
</dbReference>
<dbReference type="GO" id="GO:0003954">
    <property type="term" value="F:NADH dehydrogenase activity"/>
    <property type="evidence" value="ECO:0007669"/>
    <property type="project" value="TreeGrafter"/>
</dbReference>
<dbReference type="GO" id="GO:0016655">
    <property type="term" value="F:oxidoreductase activity, acting on NAD(P)H, quinone or similar compound as acceptor"/>
    <property type="evidence" value="ECO:0007669"/>
    <property type="project" value="UniProtKB-UniRule"/>
</dbReference>
<dbReference type="GO" id="GO:0048038">
    <property type="term" value="F:quinone binding"/>
    <property type="evidence" value="ECO:0007669"/>
    <property type="project" value="UniProtKB-KW"/>
</dbReference>
<dbReference type="GO" id="GO:0009060">
    <property type="term" value="P:aerobic respiration"/>
    <property type="evidence" value="ECO:0007669"/>
    <property type="project" value="TreeGrafter"/>
</dbReference>
<dbReference type="HAMAP" id="MF_01350">
    <property type="entry name" value="NDH1_NuoH"/>
    <property type="match status" value="1"/>
</dbReference>
<dbReference type="InterPro" id="IPR001694">
    <property type="entry name" value="NADH_UbQ_OxRdtase_su1/FPO"/>
</dbReference>
<dbReference type="InterPro" id="IPR018086">
    <property type="entry name" value="NADH_UbQ_OxRdtase_su1_CS"/>
</dbReference>
<dbReference type="NCBIfam" id="NF004741">
    <property type="entry name" value="PRK06076.1-2"/>
    <property type="match status" value="1"/>
</dbReference>
<dbReference type="NCBIfam" id="NF004743">
    <property type="entry name" value="PRK06076.1-4"/>
    <property type="match status" value="1"/>
</dbReference>
<dbReference type="PANTHER" id="PTHR11432">
    <property type="entry name" value="NADH DEHYDROGENASE SUBUNIT 1"/>
    <property type="match status" value="1"/>
</dbReference>
<dbReference type="PANTHER" id="PTHR11432:SF3">
    <property type="entry name" value="NADH-UBIQUINONE OXIDOREDUCTASE CHAIN 1"/>
    <property type="match status" value="1"/>
</dbReference>
<dbReference type="Pfam" id="PF00146">
    <property type="entry name" value="NADHdh"/>
    <property type="match status" value="1"/>
</dbReference>
<dbReference type="PROSITE" id="PS00668">
    <property type="entry name" value="COMPLEX1_ND1_2"/>
    <property type="match status" value="1"/>
</dbReference>
<feature type="chain" id="PRO_0000299936" description="NADH-quinone oxidoreductase subunit H">
    <location>
        <begin position="1"/>
        <end position="449"/>
    </location>
</feature>
<feature type="transmembrane region" description="Helical" evidence="1">
    <location>
        <begin position="26"/>
        <end position="46"/>
    </location>
</feature>
<feature type="transmembrane region" description="Helical" evidence="1">
    <location>
        <begin position="96"/>
        <end position="116"/>
    </location>
</feature>
<feature type="transmembrane region" description="Helical" evidence="1">
    <location>
        <begin position="136"/>
        <end position="156"/>
    </location>
</feature>
<feature type="transmembrane region" description="Helical" evidence="1">
    <location>
        <begin position="177"/>
        <end position="197"/>
    </location>
</feature>
<feature type="transmembrane region" description="Helical" evidence="1">
    <location>
        <begin position="211"/>
        <end position="231"/>
    </location>
</feature>
<feature type="transmembrane region" description="Helical" evidence="1">
    <location>
        <begin position="259"/>
        <end position="279"/>
    </location>
</feature>
<feature type="transmembrane region" description="Helical" evidence="1">
    <location>
        <begin position="298"/>
        <end position="318"/>
    </location>
</feature>
<feature type="transmembrane region" description="Helical" evidence="1">
    <location>
        <begin position="330"/>
        <end position="350"/>
    </location>
</feature>
<feature type="transmembrane region" description="Helical" evidence="1">
    <location>
        <begin position="365"/>
        <end position="385"/>
    </location>
</feature>
<feature type="region of interest" description="Disordered" evidence="2">
    <location>
        <begin position="396"/>
        <end position="449"/>
    </location>
</feature>
<proteinExistence type="inferred from homology"/>
<organism>
    <name type="scientific">Frankia alni (strain DSM 45986 / CECT 9034 / ACN14a)</name>
    <dbReference type="NCBI Taxonomy" id="326424"/>
    <lineage>
        <taxon>Bacteria</taxon>
        <taxon>Bacillati</taxon>
        <taxon>Actinomycetota</taxon>
        <taxon>Actinomycetes</taxon>
        <taxon>Frankiales</taxon>
        <taxon>Frankiaceae</taxon>
        <taxon>Frankia</taxon>
    </lineage>
</organism>
<name>NUOH_FRAAA</name>
<evidence type="ECO:0000255" key="1">
    <source>
        <dbReference type="HAMAP-Rule" id="MF_01350"/>
    </source>
</evidence>
<evidence type="ECO:0000256" key="2">
    <source>
        <dbReference type="SAM" id="MobiDB-lite"/>
    </source>
</evidence>
<reference key="1">
    <citation type="journal article" date="2007" name="Genome Res.">
        <title>Genome characteristics of facultatively symbiotic Frankia sp. strains reflect host range and host plant biogeography.</title>
        <authorList>
            <person name="Normand P."/>
            <person name="Lapierre P."/>
            <person name="Tisa L.S."/>
            <person name="Gogarten J.P."/>
            <person name="Alloisio N."/>
            <person name="Bagnarol E."/>
            <person name="Bassi C.A."/>
            <person name="Berry A.M."/>
            <person name="Bickhart D.M."/>
            <person name="Choisne N."/>
            <person name="Couloux A."/>
            <person name="Cournoyer B."/>
            <person name="Cruveiller S."/>
            <person name="Daubin V."/>
            <person name="Demange N."/>
            <person name="Francino M.P."/>
            <person name="Goltsman E."/>
            <person name="Huang Y."/>
            <person name="Kopp O.R."/>
            <person name="Labarre L."/>
            <person name="Lapidus A."/>
            <person name="Lavire C."/>
            <person name="Marechal J."/>
            <person name="Martinez M."/>
            <person name="Mastronunzio J.E."/>
            <person name="Mullin B.C."/>
            <person name="Niemann J."/>
            <person name="Pujic P."/>
            <person name="Rawnsley T."/>
            <person name="Rouy Z."/>
            <person name="Schenowitz C."/>
            <person name="Sellstedt A."/>
            <person name="Tavares F."/>
            <person name="Tomkins J.P."/>
            <person name="Vallenet D."/>
            <person name="Valverde C."/>
            <person name="Wall L.G."/>
            <person name="Wang Y."/>
            <person name="Medigue C."/>
            <person name="Benson D.R."/>
        </authorList>
    </citation>
    <scope>NUCLEOTIDE SEQUENCE [LARGE SCALE GENOMIC DNA]</scope>
    <source>
        <strain>DSM 45986 / CECT 9034 / ACN14a</strain>
    </source>
</reference>
<keyword id="KW-1003">Cell membrane</keyword>
<keyword id="KW-0472">Membrane</keyword>
<keyword id="KW-0520">NAD</keyword>
<keyword id="KW-0874">Quinone</keyword>
<keyword id="KW-1185">Reference proteome</keyword>
<keyword id="KW-1278">Translocase</keyword>
<keyword id="KW-0812">Transmembrane</keyword>
<keyword id="KW-1133">Transmembrane helix</keyword>
<keyword id="KW-0830">Ubiquinone</keyword>
<sequence>MSVTASTLVLAAPVDPDLSGFGDDPFWLILLKGVAVFAFLLLMTLFSIVFERKVVAKMQQRVGPNRHGPKGWLQSLADGAKLMLKEDLIPALADKPIFILAPILSAVPAFLAFAVIPFGPEVSIFGERTTLQLADLPVSVLYMLAAASLGVYGLILSGWSSGSTYPLLGSLRSAAQIISYEVAMGLSFVAVFIYAGTLSTSGIVESQSGRWYIALVPSFVLYCISMVGETNRTPFDLPEAEGELVGGFHTEYSSIKFAFFFLAEYINMVTVSAIATTLFLGGWQPPPIPGLSGLDHGWVPLIWFVLKLLLFLFFFIWLRGTLPRLRYDQFMAFGWKVLIPVGLLWVLVIATFRVYQKDVDDRTPWLIGAGVVIGIMLIVALLDPGGAKHQRELEEAERRKLAEAPSLESIPWPPPPPGGAHHRPAVPAGTSANGSSTVIPADPPPRQES</sequence>
<comment type="function">
    <text evidence="1">NDH-1 shuttles electrons from NADH, via FMN and iron-sulfur (Fe-S) centers, to quinones in the respiratory chain. The immediate electron acceptor for the enzyme in this species is believed to be ubiquinone. Couples the redox reaction to proton translocation (for every two electrons transferred, four hydrogen ions are translocated across the cytoplasmic membrane), and thus conserves the redox energy in a proton gradient. This subunit may bind ubiquinone.</text>
</comment>
<comment type="catalytic activity">
    <reaction evidence="1">
        <text>a quinone + NADH + 5 H(+)(in) = a quinol + NAD(+) + 4 H(+)(out)</text>
        <dbReference type="Rhea" id="RHEA:57888"/>
        <dbReference type="ChEBI" id="CHEBI:15378"/>
        <dbReference type="ChEBI" id="CHEBI:24646"/>
        <dbReference type="ChEBI" id="CHEBI:57540"/>
        <dbReference type="ChEBI" id="CHEBI:57945"/>
        <dbReference type="ChEBI" id="CHEBI:132124"/>
    </reaction>
</comment>
<comment type="subunit">
    <text evidence="1">NDH-1 is composed of 14 different subunits. Subunits NuoA, H, J, K, L, M, N constitute the membrane sector of the complex.</text>
</comment>
<comment type="subcellular location">
    <subcellularLocation>
        <location evidence="1">Cell membrane</location>
        <topology evidence="1">Multi-pass membrane protein</topology>
    </subcellularLocation>
</comment>
<comment type="similarity">
    <text evidence="1">Belongs to the complex I subunit 1 family.</text>
</comment>
<protein>
    <recommendedName>
        <fullName evidence="1">NADH-quinone oxidoreductase subunit H</fullName>
        <ecNumber evidence="1">7.1.1.-</ecNumber>
    </recommendedName>
    <alternativeName>
        <fullName evidence="1">NADH dehydrogenase I subunit H</fullName>
    </alternativeName>
    <alternativeName>
        <fullName evidence="1">NDH-1 subunit H</fullName>
    </alternativeName>
</protein>
<accession>Q0RRW1</accession>
<gene>
    <name evidence="1" type="primary">nuoH</name>
    <name type="ordered locus">FRAAL1039</name>
</gene>